<evidence type="ECO:0000255" key="1">
    <source>
        <dbReference type="HAMAP-Rule" id="MF_01588"/>
    </source>
</evidence>
<name>DNLJ_PSEU2</name>
<sequence length="787" mass="86300">MKAVETRILELRAELDQHNYRYHVLDEPSIPDVEYDRLFHELKALEAENPHLVTPDSPTQRVGSAALSAFTQVRHEMPMLSLGNAFEENDMLEFDRRVTEGLDLPAGDLFGEGGKVQYSCEPKLDGLAVSLLYRDGALVRGATRGDGTTGEDISVNVRTVRNIPLKLQGKGWPDVLEVRGEVFMSKAGFERLNASQLEIGGKTFANPRNAAAGSLRQLDSKITANRPLEFCCYGLGQTSAEIADTHIGVLEALKKWGMPVSRELKLANGVEECLAYYRDIGERRLTLTYEIDGVVFKVNNLAAQRELGFRAREPRWAIAHKFPAMEELTELLDVEFQVGRTGAVTPVARLKPVKVAGVMVANATLHNMDEVARLGLMIGDTVIIRRAGDVIPQVVQVVAERRPENARAVQVPQTCPVCGSHVERTQLIKRSKGKETVTEGAVYRCVGRLACGAQLKQAIIHYVSRRAMDIEGLGDKTIEQLVDEKLIGSPADLYKLKYEQIIDLEGFAEISSNKLLKAIADSRQPTLARFIYALGIPDVGEETAKVLARSLASLERVKQALPEVLTYLPDVGLEVAYEIRSFFEDEHNRSVIDALLGECGLQLQDQGELGAEFAASTTLEGLIDKLHIPSVGPGAAQKLADRFGTLEAIISADWLDMRQALPEKQAKSVRDFFDDSANAERARAIEAQLKDFGMHWRSEKKTVEGLPLAGQTWVLTGSLERMSRDVAKEKLESLGAKVSGSVSAKTHTVVAGPGAGSKLTKANELGLTVLDEDALLKRLIELGVAVD</sequence>
<protein>
    <recommendedName>
        <fullName evidence="1">DNA ligase</fullName>
        <ecNumber evidence="1">6.5.1.2</ecNumber>
    </recommendedName>
    <alternativeName>
        <fullName evidence="1">Polydeoxyribonucleotide synthase [NAD(+)]</fullName>
    </alternativeName>
</protein>
<keyword id="KW-0227">DNA damage</keyword>
<keyword id="KW-0234">DNA repair</keyword>
<keyword id="KW-0235">DNA replication</keyword>
<keyword id="KW-0436">Ligase</keyword>
<keyword id="KW-0460">Magnesium</keyword>
<keyword id="KW-0464">Manganese</keyword>
<keyword id="KW-0479">Metal-binding</keyword>
<keyword id="KW-0520">NAD</keyword>
<keyword id="KW-0862">Zinc</keyword>
<comment type="function">
    <text evidence="1">DNA ligase that catalyzes the formation of phosphodiester linkages between 5'-phosphoryl and 3'-hydroxyl groups in double-stranded DNA using NAD as a coenzyme and as the energy source for the reaction. It is essential for DNA replication and repair of damaged DNA.</text>
</comment>
<comment type="catalytic activity">
    <reaction evidence="1">
        <text>NAD(+) + (deoxyribonucleotide)n-3'-hydroxyl + 5'-phospho-(deoxyribonucleotide)m = (deoxyribonucleotide)n+m + AMP + beta-nicotinamide D-nucleotide.</text>
        <dbReference type="EC" id="6.5.1.2"/>
    </reaction>
</comment>
<comment type="cofactor">
    <cofactor evidence="1">
        <name>Mg(2+)</name>
        <dbReference type="ChEBI" id="CHEBI:18420"/>
    </cofactor>
    <cofactor evidence="1">
        <name>Mn(2+)</name>
        <dbReference type="ChEBI" id="CHEBI:29035"/>
    </cofactor>
</comment>
<comment type="similarity">
    <text evidence="1">Belongs to the NAD-dependent DNA ligase family. LigA subfamily.</text>
</comment>
<proteinExistence type="inferred from homology"/>
<feature type="chain" id="PRO_0000313381" description="DNA ligase">
    <location>
        <begin position="1"/>
        <end position="787"/>
    </location>
</feature>
<feature type="domain" description="BRCT" evidence="1">
    <location>
        <begin position="703"/>
        <end position="787"/>
    </location>
</feature>
<feature type="active site" description="N6-AMP-lysine intermediate" evidence="1">
    <location>
        <position position="123"/>
    </location>
</feature>
<feature type="binding site" evidence="1">
    <location>
        <begin position="32"/>
        <end position="36"/>
    </location>
    <ligand>
        <name>NAD(+)</name>
        <dbReference type="ChEBI" id="CHEBI:57540"/>
    </ligand>
</feature>
<feature type="binding site" evidence="1">
    <location>
        <begin position="81"/>
        <end position="82"/>
    </location>
    <ligand>
        <name>NAD(+)</name>
        <dbReference type="ChEBI" id="CHEBI:57540"/>
    </ligand>
</feature>
<feature type="binding site" evidence="1">
    <location>
        <position position="121"/>
    </location>
    <ligand>
        <name>NAD(+)</name>
        <dbReference type="ChEBI" id="CHEBI:57540"/>
    </ligand>
</feature>
<feature type="binding site" evidence="1">
    <location>
        <position position="144"/>
    </location>
    <ligand>
        <name>NAD(+)</name>
        <dbReference type="ChEBI" id="CHEBI:57540"/>
    </ligand>
</feature>
<feature type="binding site" evidence="1">
    <location>
        <position position="181"/>
    </location>
    <ligand>
        <name>NAD(+)</name>
        <dbReference type="ChEBI" id="CHEBI:57540"/>
    </ligand>
</feature>
<feature type="binding site" evidence="1">
    <location>
        <position position="297"/>
    </location>
    <ligand>
        <name>NAD(+)</name>
        <dbReference type="ChEBI" id="CHEBI:57540"/>
    </ligand>
</feature>
<feature type="binding site" evidence="1">
    <location>
        <position position="321"/>
    </location>
    <ligand>
        <name>NAD(+)</name>
        <dbReference type="ChEBI" id="CHEBI:57540"/>
    </ligand>
</feature>
<feature type="binding site" evidence="1">
    <location>
        <position position="415"/>
    </location>
    <ligand>
        <name>Zn(2+)</name>
        <dbReference type="ChEBI" id="CHEBI:29105"/>
    </ligand>
</feature>
<feature type="binding site" evidence="1">
    <location>
        <position position="418"/>
    </location>
    <ligand>
        <name>Zn(2+)</name>
        <dbReference type="ChEBI" id="CHEBI:29105"/>
    </ligand>
</feature>
<feature type="binding site" evidence="1">
    <location>
        <position position="445"/>
    </location>
    <ligand>
        <name>Zn(2+)</name>
        <dbReference type="ChEBI" id="CHEBI:29105"/>
    </ligand>
</feature>
<feature type="binding site" evidence="1">
    <location>
        <position position="451"/>
    </location>
    <ligand>
        <name>Zn(2+)</name>
        <dbReference type="ChEBI" id="CHEBI:29105"/>
    </ligand>
</feature>
<dbReference type="EC" id="6.5.1.2" evidence="1"/>
<dbReference type="EMBL" id="CP000075">
    <property type="protein sequence ID" value="AAY36866.1"/>
    <property type="molecule type" value="Genomic_DNA"/>
</dbReference>
<dbReference type="RefSeq" id="WP_011267261.1">
    <property type="nucleotide sequence ID" value="NC_007005.1"/>
</dbReference>
<dbReference type="RefSeq" id="YP_234904.1">
    <property type="nucleotide sequence ID" value="NC_007005.1"/>
</dbReference>
<dbReference type="SMR" id="Q4ZVF6"/>
<dbReference type="STRING" id="205918.Psyr_1819"/>
<dbReference type="KEGG" id="psb:Psyr_1819"/>
<dbReference type="PATRIC" id="fig|205918.7.peg.1863"/>
<dbReference type="eggNOG" id="COG0272">
    <property type="taxonomic scope" value="Bacteria"/>
</dbReference>
<dbReference type="HOGENOM" id="CLU_007764_2_1_6"/>
<dbReference type="OrthoDB" id="9759736at2"/>
<dbReference type="Proteomes" id="UP000000426">
    <property type="component" value="Chromosome"/>
</dbReference>
<dbReference type="GO" id="GO:0005829">
    <property type="term" value="C:cytosol"/>
    <property type="evidence" value="ECO:0007669"/>
    <property type="project" value="TreeGrafter"/>
</dbReference>
<dbReference type="GO" id="GO:0003677">
    <property type="term" value="F:DNA binding"/>
    <property type="evidence" value="ECO:0007669"/>
    <property type="project" value="InterPro"/>
</dbReference>
<dbReference type="GO" id="GO:0003911">
    <property type="term" value="F:DNA ligase (NAD+) activity"/>
    <property type="evidence" value="ECO:0007669"/>
    <property type="project" value="UniProtKB-UniRule"/>
</dbReference>
<dbReference type="GO" id="GO:0046872">
    <property type="term" value="F:metal ion binding"/>
    <property type="evidence" value="ECO:0007669"/>
    <property type="project" value="UniProtKB-KW"/>
</dbReference>
<dbReference type="GO" id="GO:0006281">
    <property type="term" value="P:DNA repair"/>
    <property type="evidence" value="ECO:0007669"/>
    <property type="project" value="UniProtKB-KW"/>
</dbReference>
<dbReference type="GO" id="GO:0006260">
    <property type="term" value="P:DNA replication"/>
    <property type="evidence" value="ECO:0007669"/>
    <property type="project" value="UniProtKB-KW"/>
</dbReference>
<dbReference type="CDD" id="cd17748">
    <property type="entry name" value="BRCT_DNA_ligase_like"/>
    <property type="match status" value="1"/>
</dbReference>
<dbReference type="CDD" id="cd00114">
    <property type="entry name" value="LIGANc"/>
    <property type="match status" value="1"/>
</dbReference>
<dbReference type="FunFam" id="1.10.150.20:FF:000006">
    <property type="entry name" value="DNA ligase"/>
    <property type="match status" value="1"/>
</dbReference>
<dbReference type="FunFam" id="1.10.150.20:FF:000007">
    <property type="entry name" value="DNA ligase"/>
    <property type="match status" value="1"/>
</dbReference>
<dbReference type="FunFam" id="1.10.287.610:FF:000002">
    <property type="entry name" value="DNA ligase"/>
    <property type="match status" value="1"/>
</dbReference>
<dbReference type="FunFam" id="2.40.50.140:FF:000012">
    <property type="entry name" value="DNA ligase"/>
    <property type="match status" value="1"/>
</dbReference>
<dbReference type="FunFam" id="3.30.470.30:FF:000001">
    <property type="entry name" value="DNA ligase"/>
    <property type="match status" value="1"/>
</dbReference>
<dbReference type="Gene3D" id="6.20.10.30">
    <property type="match status" value="1"/>
</dbReference>
<dbReference type="Gene3D" id="1.10.150.20">
    <property type="entry name" value="5' to 3' exonuclease, C-terminal subdomain"/>
    <property type="match status" value="3"/>
</dbReference>
<dbReference type="Gene3D" id="3.40.50.10190">
    <property type="entry name" value="BRCT domain"/>
    <property type="match status" value="1"/>
</dbReference>
<dbReference type="Gene3D" id="3.30.470.30">
    <property type="entry name" value="DNA ligase/mRNA capping enzyme"/>
    <property type="match status" value="1"/>
</dbReference>
<dbReference type="Gene3D" id="1.10.287.610">
    <property type="entry name" value="Helix hairpin bin"/>
    <property type="match status" value="1"/>
</dbReference>
<dbReference type="Gene3D" id="2.40.50.140">
    <property type="entry name" value="Nucleic acid-binding proteins"/>
    <property type="match status" value="1"/>
</dbReference>
<dbReference type="HAMAP" id="MF_01588">
    <property type="entry name" value="DNA_ligase_A"/>
    <property type="match status" value="1"/>
</dbReference>
<dbReference type="InterPro" id="IPR001357">
    <property type="entry name" value="BRCT_dom"/>
</dbReference>
<dbReference type="InterPro" id="IPR036420">
    <property type="entry name" value="BRCT_dom_sf"/>
</dbReference>
<dbReference type="InterPro" id="IPR041663">
    <property type="entry name" value="DisA/LigA_HHH"/>
</dbReference>
<dbReference type="InterPro" id="IPR001679">
    <property type="entry name" value="DNA_ligase"/>
</dbReference>
<dbReference type="InterPro" id="IPR018239">
    <property type="entry name" value="DNA_ligase_AS"/>
</dbReference>
<dbReference type="InterPro" id="IPR033136">
    <property type="entry name" value="DNA_ligase_CS"/>
</dbReference>
<dbReference type="InterPro" id="IPR013839">
    <property type="entry name" value="DNAligase_adenylation"/>
</dbReference>
<dbReference type="InterPro" id="IPR013840">
    <property type="entry name" value="DNAligase_N"/>
</dbReference>
<dbReference type="InterPro" id="IPR003583">
    <property type="entry name" value="Hlx-hairpin-Hlx_DNA-bd_motif"/>
</dbReference>
<dbReference type="InterPro" id="IPR012340">
    <property type="entry name" value="NA-bd_OB-fold"/>
</dbReference>
<dbReference type="InterPro" id="IPR004150">
    <property type="entry name" value="NAD_DNA_ligase_OB"/>
</dbReference>
<dbReference type="InterPro" id="IPR010994">
    <property type="entry name" value="RuvA_2-like"/>
</dbReference>
<dbReference type="InterPro" id="IPR004149">
    <property type="entry name" value="Znf_DNAligase_C4"/>
</dbReference>
<dbReference type="NCBIfam" id="TIGR00575">
    <property type="entry name" value="dnlj"/>
    <property type="match status" value="1"/>
</dbReference>
<dbReference type="NCBIfam" id="NF005932">
    <property type="entry name" value="PRK07956.1"/>
    <property type="match status" value="1"/>
</dbReference>
<dbReference type="PANTHER" id="PTHR23389">
    <property type="entry name" value="CHROMOSOME TRANSMISSION FIDELITY FACTOR 18"/>
    <property type="match status" value="1"/>
</dbReference>
<dbReference type="PANTHER" id="PTHR23389:SF9">
    <property type="entry name" value="DNA LIGASE"/>
    <property type="match status" value="1"/>
</dbReference>
<dbReference type="Pfam" id="PF00533">
    <property type="entry name" value="BRCT"/>
    <property type="match status" value="1"/>
</dbReference>
<dbReference type="Pfam" id="PF01653">
    <property type="entry name" value="DNA_ligase_aden"/>
    <property type="match status" value="1"/>
</dbReference>
<dbReference type="Pfam" id="PF03120">
    <property type="entry name" value="DNA_ligase_OB"/>
    <property type="match status" value="1"/>
</dbReference>
<dbReference type="Pfam" id="PF03119">
    <property type="entry name" value="DNA_ligase_ZBD"/>
    <property type="match status" value="1"/>
</dbReference>
<dbReference type="Pfam" id="PF12826">
    <property type="entry name" value="HHH_2"/>
    <property type="match status" value="2"/>
</dbReference>
<dbReference type="Pfam" id="PF14520">
    <property type="entry name" value="HHH_5"/>
    <property type="match status" value="1"/>
</dbReference>
<dbReference type="Pfam" id="PF22745">
    <property type="entry name" value="Nlig-Ia"/>
    <property type="match status" value="1"/>
</dbReference>
<dbReference type="PIRSF" id="PIRSF001604">
    <property type="entry name" value="LigA"/>
    <property type="match status" value="1"/>
</dbReference>
<dbReference type="SMART" id="SM00292">
    <property type="entry name" value="BRCT"/>
    <property type="match status" value="1"/>
</dbReference>
<dbReference type="SMART" id="SM00278">
    <property type="entry name" value="HhH1"/>
    <property type="match status" value="3"/>
</dbReference>
<dbReference type="SMART" id="SM00532">
    <property type="entry name" value="LIGANc"/>
    <property type="match status" value="1"/>
</dbReference>
<dbReference type="SUPFAM" id="SSF52113">
    <property type="entry name" value="BRCT domain"/>
    <property type="match status" value="1"/>
</dbReference>
<dbReference type="SUPFAM" id="SSF56091">
    <property type="entry name" value="DNA ligase/mRNA capping enzyme, catalytic domain"/>
    <property type="match status" value="1"/>
</dbReference>
<dbReference type="SUPFAM" id="SSF50249">
    <property type="entry name" value="Nucleic acid-binding proteins"/>
    <property type="match status" value="1"/>
</dbReference>
<dbReference type="SUPFAM" id="SSF47781">
    <property type="entry name" value="RuvA domain 2-like"/>
    <property type="match status" value="2"/>
</dbReference>
<dbReference type="PROSITE" id="PS50172">
    <property type="entry name" value="BRCT"/>
    <property type="match status" value="1"/>
</dbReference>
<dbReference type="PROSITE" id="PS01055">
    <property type="entry name" value="DNA_LIGASE_N1"/>
    <property type="match status" value="1"/>
</dbReference>
<dbReference type="PROSITE" id="PS01056">
    <property type="entry name" value="DNA_LIGASE_N2"/>
    <property type="match status" value="1"/>
</dbReference>
<organism>
    <name type="scientific">Pseudomonas syringae pv. syringae (strain B728a)</name>
    <dbReference type="NCBI Taxonomy" id="205918"/>
    <lineage>
        <taxon>Bacteria</taxon>
        <taxon>Pseudomonadati</taxon>
        <taxon>Pseudomonadota</taxon>
        <taxon>Gammaproteobacteria</taxon>
        <taxon>Pseudomonadales</taxon>
        <taxon>Pseudomonadaceae</taxon>
        <taxon>Pseudomonas</taxon>
        <taxon>Pseudomonas syringae</taxon>
    </lineage>
</organism>
<gene>
    <name evidence="1" type="primary">ligA</name>
    <name type="ordered locus">Psyr_1819</name>
</gene>
<reference key="1">
    <citation type="journal article" date="2005" name="Proc. Natl. Acad. Sci. U.S.A.">
        <title>Comparison of the complete genome sequences of Pseudomonas syringae pv. syringae B728a and pv. tomato DC3000.</title>
        <authorList>
            <person name="Feil H."/>
            <person name="Feil W.S."/>
            <person name="Chain P."/>
            <person name="Larimer F."/>
            <person name="Dibartolo G."/>
            <person name="Copeland A."/>
            <person name="Lykidis A."/>
            <person name="Trong S."/>
            <person name="Nolan M."/>
            <person name="Goltsman E."/>
            <person name="Thiel J."/>
            <person name="Malfatti S."/>
            <person name="Loper J.E."/>
            <person name="Lapidus A."/>
            <person name="Detter J.C."/>
            <person name="Land M."/>
            <person name="Richardson P.M."/>
            <person name="Kyrpides N.C."/>
            <person name="Ivanova N."/>
            <person name="Lindow S.E."/>
        </authorList>
    </citation>
    <scope>NUCLEOTIDE SEQUENCE [LARGE SCALE GENOMIC DNA]</scope>
    <source>
        <strain>B728a</strain>
    </source>
</reference>
<accession>Q4ZVF6</accession>